<proteinExistence type="inferred from homology"/>
<protein>
    <recommendedName>
        <fullName evidence="1">Polyribonucleotide nucleotidyltransferase</fullName>
        <ecNumber evidence="1">2.7.7.8</ecNumber>
    </recommendedName>
    <alternativeName>
        <fullName evidence="1">Polynucleotide phosphorylase</fullName>
        <shortName evidence="1">PNPase</shortName>
    </alternativeName>
</protein>
<reference key="1">
    <citation type="journal article" date="2004" name="Proc. Natl. Acad. Sci. U.S.A.">
        <title>Genomic analysis of Bacteroides fragilis reveals extensive DNA inversions regulating cell surface adaptation.</title>
        <authorList>
            <person name="Kuwahara T."/>
            <person name="Yamashita A."/>
            <person name="Hirakawa H."/>
            <person name="Nakayama H."/>
            <person name="Toh H."/>
            <person name="Okada N."/>
            <person name="Kuhara S."/>
            <person name="Hattori M."/>
            <person name="Hayashi T."/>
            <person name="Ohnishi Y."/>
        </authorList>
    </citation>
    <scope>NUCLEOTIDE SEQUENCE [LARGE SCALE GENOMIC DNA]</scope>
    <source>
        <strain>YCH46</strain>
    </source>
</reference>
<accession>Q64N73</accession>
<organism>
    <name type="scientific">Bacteroides fragilis (strain YCH46)</name>
    <dbReference type="NCBI Taxonomy" id="295405"/>
    <lineage>
        <taxon>Bacteria</taxon>
        <taxon>Pseudomonadati</taxon>
        <taxon>Bacteroidota</taxon>
        <taxon>Bacteroidia</taxon>
        <taxon>Bacteroidales</taxon>
        <taxon>Bacteroidaceae</taxon>
        <taxon>Bacteroides</taxon>
    </lineage>
</organism>
<dbReference type="EC" id="2.7.7.8" evidence="1"/>
<dbReference type="EMBL" id="AP006841">
    <property type="protein sequence ID" value="BAD51064.1"/>
    <property type="molecule type" value="Genomic_DNA"/>
</dbReference>
<dbReference type="RefSeq" id="WP_005791373.1">
    <property type="nucleotide sequence ID" value="NZ_UYXF01000007.1"/>
</dbReference>
<dbReference type="RefSeq" id="YP_101598.1">
    <property type="nucleotide sequence ID" value="NC_006347.1"/>
</dbReference>
<dbReference type="SMR" id="Q64N73"/>
<dbReference type="STRING" id="295405.BF4326"/>
<dbReference type="GeneID" id="60366680"/>
<dbReference type="KEGG" id="bfr:BF4326"/>
<dbReference type="PATRIC" id="fig|295405.11.peg.4168"/>
<dbReference type="HOGENOM" id="CLU_004217_2_2_10"/>
<dbReference type="OrthoDB" id="9804305at2"/>
<dbReference type="Proteomes" id="UP000002197">
    <property type="component" value="Chromosome"/>
</dbReference>
<dbReference type="GO" id="GO:0005829">
    <property type="term" value="C:cytosol"/>
    <property type="evidence" value="ECO:0007669"/>
    <property type="project" value="TreeGrafter"/>
</dbReference>
<dbReference type="GO" id="GO:0000175">
    <property type="term" value="F:3'-5'-RNA exonuclease activity"/>
    <property type="evidence" value="ECO:0007669"/>
    <property type="project" value="TreeGrafter"/>
</dbReference>
<dbReference type="GO" id="GO:0000287">
    <property type="term" value="F:magnesium ion binding"/>
    <property type="evidence" value="ECO:0007669"/>
    <property type="project" value="UniProtKB-UniRule"/>
</dbReference>
<dbReference type="GO" id="GO:0004654">
    <property type="term" value="F:polyribonucleotide nucleotidyltransferase activity"/>
    <property type="evidence" value="ECO:0007669"/>
    <property type="project" value="UniProtKB-UniRule"/>
</dbReference>
<dbReference type="GO" id="GO:0003723">
    <property type="term" value="F:RNA binding"/>
    <property type="evidence" value="ECO:0007669"/>
    <property type="project" value="UniProtKB-UniRule"/>
</dbReference>
<dbReference type="GO" id="GO:0006402">
    <property type="term" value="P:mRNA catabolic process"/>
    <property type="evidence" value="ECO:0007669"/>
    <property type="project" value="UniProtKB-UniRule"/>
</dbReference>
<dbReference type="GO" id="GO:0006396">
    <property type="term" value="P:RNA processing"/>
    <property type="evidence" value="ECO:0007669"/>
    <property type="project" value="InterPro"/>
</dbReference>
<dbReference type="CDD" id="cd02393">
    <property type="entry name" value="KH-I_PNPase"/>
    <property type="match status" value="1"/>
</dbReference>
<dbReference type="CDD" id="cd11363">
    <property type="entry name" value="RNase_PH_PNPase_1"/>
    <property type="match status" value="1"/>
</dbReference>
<dbReference type="CDD" id="cd11364">
    <property type="entry name" value="RNase_PH_PNPase_2"/>
    <property type="match status" value="1"/>
</dbReference>
<dbReference type="CDD" id="cd04472">
    <property type="entry name" value="S1_PNPase"/>
    <property type="match status" value="1"/>
</dbReference>
<dbReference type="FunFam" id="2.40.50.140:FF:000178">
    <property type="entry name" value="Polyribonucleotide nucleotidyltransferase"/>
    <property type="match status" value="1"/>
</dbReference>
<dbReference type="FunFam" id="3.30.1370.10:FF:000001">
    <property type="entry name" value="Polyribonucleotide nucleotidyltransferase"/>
    <property type="match status" value="1"/>
</dbReference>
<dbReference type="FunFam" id="3.30.230.70:FF:000001">
    <property type="entry name" value="Polyribonucleotide nucleotidyltransferase"/>
    <property type="match status" value="1"/>
</dbReference>
<dbReference type="FunFam" id="3.30.230.70:FF:000014">
    <property type="entry name" value="Polyribonucleotide nucleotidyltransferase"/>
    <property type="match status" value="1"/>
</dbReference>
<dbReference type="Gene3D" id="3.30.230.70">
    <property type="entry name" value="GHMP Kinase, N-terminal domain"/>
    <property type="match status" value="2"/>
</dbReference>
<dbReference type="Gene3D" id="3.30.1370.10">
    <property type="entry name" value="K Homology domain, type 1"/>
    <property type="match status" value="1"/>
</dbReference>
<dbReference type="Gene3D" id="2.40.50.140">
    <property type="entry name" value="Nucleic acid-binding proteins"/>
    <property type="match status" value="1"/>
</dbReference>
<dbReference type="HAMAP" id="MF_01595">
    <property type="entry name" value="PNPase"/>
    <property type="match status" value="1"/>
</dbReference>
<dbReference type="InterPro" id="IPR001247">
    <property type="entry name" value="ExoRNase_PH_dom1"/>
</dbReference>
<dbReference type="InterPro" id="IPR015847">
    <property type="entry name" value="ExoRNase_PH_dom2"/>
</dbReference>
<dbReference type="InterPro" id="IPR036345">
    <property type="entry name" value="ExoRNase_PH_dom2_sf"/>
</dbReference>
<dbReference type="InterPro" id="IPR004087">
    <property type="entry name" value="KH_dom"/>
</dbReference>
<dbReference type="InterPro" id="IPR004088">
    <property type="entry name" value="KH_dom_type_1"/>
</dbReference>
<dbReference type="InterPro" id="IPR036612">
    <property type="entry name" value="KH_dom_type_1_sf"/>
</dbReference>
<dbReference type="InterPro" id="IPR012340">
    <property type="entry name" value="NA-bd_OB-fold"/>
</dbReference>
<dbReference type="InterPro" id="IPR012162">
    <property type="entry name" value="PNPase"/>
</dbReference>
<dbReference type="InterPro" id="IPR027408">
    <property type="entry name" value="PNPase/RNase_PH_dom_sf"/>
</dbReference>
<dbReference type="InterPro" id="IPR015848">
    <property type="entry name" value="PNPase_PH_RNA-bd_bac/org-type"/>
</dbReference>
<dbReference type="InterPro" id="IPR036456">
    <property type="entry name" value="PNPase_PH_RNA-bd_sf"/>
</dbReference>
<dbReference type="InterPro" id="IPR020568">
    <property type="entry name" value="Ribosomal_Su5_D2-typ_SF"/>
</dbReference>
<dbReference type="InterPro" id="IPR003029">
    <property type="entry name" value="S1_domain"/>
</dbReference>
<dbReference type="NCBIfam" id="TIGR03591">
    <property type="entry name" value="polynuc_phos"/>
    <property type="match status" value="1"/>
</dbReference>
<dbReference type="NCBIfam" id="NF008805">
    <property type="entry name" value="PRK11824.1"/>
    <property type="match status" value="1"/>
</dbReference>
<dbReference type="PANTHER" id="PTHR11252">
    <property type="entry name" value="POLYRIBONUCLEOTIDE NUCLEOTIDYLTRANSFERASE"/>
    <property type="match status" value="1"/>
</dbReference>
<dbReference type="PANTHER" id="PTHR11252:SF0">
    <property type="entry name" value="POLYRIBONUCLEOTIDE NUCLEOTIDYLTRANSFERASE 1, MITOCHONDRIAL"/>
    <property type="match status" value="1"/>
</dbReference>
<dbReference type="Pfam" id="PF00013">
    <property type="entry name" value="KH_1"/>
    <property type="match status" value="1"/>
</dbReference>
<dbReference type="Pfam" id="PF03726">
    <property type="entry name" value="PNPase"/>
    <property type="match status" value="1"/>
</dbReference>
<dbReference type="Pfam" id="PF01138">
    <property type="entry name" value="RNase_PH"/>
    <property type="match status" value="2"/>
</dbReference>
<dbReference type="Pfam" id="PF03725">
    <property type="entry name" value="RNase_PH_C"/>
    <property type="match status" value="2"/>
</dbReference>
<dbReference type="Pfam" id="PF00575">
    <property type="entry name" value="S1"/>
    <property type="match status" value="1"/>
</dbReference>
<dbReference type="PIRSF" id="PIRSF005499">
    <property type="entry name" value="PNPase"/>
    <property type="match status" value="1"/>
</dbReference>
<dbReference type="SMART" id="SM00322">
    <property type="entry name" value="KH"/>
    <property type="match status" value="1"/>
</dbReference>
<dbReference type="SMART" id="SM00316">
    <property type="entry name" value="S1"/>
    <property type="match status" value="1"/>
</dbReference>
<dbReference type="SUPFAM" id="SSF54791">
    <property type="entry name" value="Eukaryotic type KH-domain (KH-domain type I)"/>
    <property type="match status" value="1"/>
</dbReference>
<dbReference type="SUPFAM" id="SSF50249">
    <property type="entry name" value="Nucleic acid-binding proteins"/>
    <property type="match status" value="1"/>
</dbReference>
<dbReference type="SUPFAM" id="SSF46915">
    <property type="entry name" value="Polynucleotide phosphorylase/guanosine pentaphosphate synthase (PNPase/GPSI), domain 3"/>
    <property type="match status" value="1"/>
</dbReference>
<dbReference type="SUPFAM" id="SSF55666">
    <property type="entry name" value="Ribonuclease PH domain 2-like"/>
    <property type="match status" value="2"/>
</dbReference>
<dbReference type="SUPFAM" id="SSF54211">
    <property type="entry name" value="Ribosomal protein S5 domain 2-like"/>
    <property type="match status" value="2"/>
</dbReference>
<dbReference type="PROSITE" id="PS50084">
    <property type="entry name" value="KH_TYPE_1"/>
    <property type="match status" value="1"/>
</dbReference>
<dbReference type="PROSITE" id="PS50126">
    <property type="entry name" value="S1"/>
    <property type="match status" value="1"/>
</dbReference>
<gene>
    <name evidence="1" type="primary">pnp</name>
    <name type="ordered locus">BF4326</name>
</gene>
<feature type="chain" id="PRO_0000329522" description="Polyribonucleotide nucleotidyltransferase">
    <location>
        <begin position="1"/>
        <end position="708"/>
    </location>
</feature>
<feature type="domain" description="KH" evidence="1">
    <location>
        <begin position="557"/>
        <end position="619"/>
    </location>
</feature>
<feature type="domain" description="S1 motif" evidence="1">
    <location>
        <begin position="629"/>
        <end position="699"/>
    </location>
</feature>
<feature type="binding site" evidence="1">
    <location>
        <position position="490"/>
    </location>
    <ligand>
        <name>Mg(2+)</name>
        <dbReference type="ChEBI" id="CHEBI:18420"/>
    </ligand>
</feature>
<feature type="binding site" evidence="1">
    <location>
        <position position="496"/>
    </location>
    <ligand>
        <name>Mg(2+)</name>
        <dbReference type="ChEBI" id="CHEBI:18420"/>
    </ligand>
</feature>
<name>PNP_BACFR</name>
<keyword id="KW-0963">Cytoplasm</keyword>
<keyword id="KW-0460">Magnesium</keyword>
<keyword id="KW-0479">Metal-binding</keyword>
<keyword id="KW-0548">Nucleotidyltransferase</keyword>
<keyword id="KW-0694">RNA-binding</keyword>
<keyword id="KW-0808">Transferase</keyword>
<sequence>MINPIVKTIELGDGRTITLETGKLAKQADGSVMLRMGNTMLLATVCAAKDAVPGTDFMPLQVEYKEKFAAFGRFPGGFTKREGRASDYEILTCRLVDRALRPLFPDNYHAEVYVNIILFSADGVDMPDALAGLAASAALAVSDIPFNGPISEVRVARIDGKFVINPTFDQLEQADMDIMVAATYENIMMVEGEMSEVSEAELLEAMKVAHEAIKVHCKAQMELTEMVGKTVKREYCHEENDEELRKAVHDACYDKSYAIAASGNRNKHERQDAFDAIRDEFKAQFSEEELEEKGALIDRYYHDVEKEAMRRCILDEGKRLDGRKTTEIRPIWCEVGYLPGPHGSAIFTRGETQSLTSVTLGTKLDEKIIDDVLAHGKERFLLHYNFPPFSTGEAKAQRGVGRREIGHGNLAHRALKRMIPEDYPYVVRVVSDILESNGSSSMATVCAGTLALMDAGVKIKKPVSGIAMGLIKNAGEEKYAVLSDILGDEDHLGDMDFKVTGTKDGITATQMDIKVDGLSYEILERALNQAKEGRMHILGKIEETISEPRTELKDHAPRIETMTIPKEFIGAVIGPGGKIIQGMQEETGATITIEEIDNVGRIEISGTNKKSIDDAIRLIKGIVAVPEVGEVYKGKVRSIMPYGAFVEFLPGKDGLLHISEIDWKRLETVEEAGIKEGDEIEVKLIDIDPKTGKFKLSRKVLLPRPEKK</sequence>
<evidence type="ECO:0000255" key="1">
    <source>
        <dbReference type="HAMAP-Rule" id="MF_01595"/>
    </source>
</evidence>
<comment type="function">
    <text evidence="1">Involved in mRNA degradation. Catalyzes the phosphorolysis of single-stranded polyribonucleotides processively in the 3'- to 5'-direction.</text>
</comment>
<comment type="catalytic activity">
    <reaction evidence="1">
        <text>RNA(n+1) + phosphate = RNA(n) + a ribonucleoside 5'-diphosphate</text>
        <dbReference type="Rhea" id="RHEA:22096"/>
        <dbReference type="Rhea" id="RHEA-COMP:14527"/>
        <dbReference type="Rhea" id="RHEA-COMP:17342"/>
        <dbReference type="ChEBI" id="CHEBI:43474"/>
        <dbReference type="ChEBI" id="CHEBI:57930"/>
        <dbReference type="ChEBI" id="CHEBI:140395"/>
        <dbReference type="EC" id="2.7.7.8"/>
    </reaction>
</comment>
<comment type="cofactor">
    <cofactor evidence="1">
        <name>Mg(2+)</name>
        <dbReference type="ChEBI" id="CHEBI:18420"/>
    </cofactor>
</comment>
<comment type="subcellular location">
    <subcellularLocation>
        <location evidence="1">Cytoplasm</location>
    </subcellularLocation>
</comment>
<comment type="similarity">
    <text evidence="1">Belongs to the polyribonucleotide nucleotidyltransferase family.</text>
</comment>